<comment type="function">
    <text evidence="1">Catalyzes the isomerization between 2-isopropylmalate and 3-isopropylmalate, via the formation of 2-isopropylmaleate.</text>
</comment>
<comment type="catalytic activity">
    <reaction evidence="1">
        <text>(2R,3S)-3-isopropylmalate = (2S)-2-isopropylmalate</text>
        <dbReference type="Rhea" id="RHEA:32287"/>
        <dbReference type="ChEBI" id="CHEBI:1178"/>
        <dbReference type="ChEBI" id="CHEBI:35121"/>
        <dbReference type="EC" id="4.2.1.33"/>
    </reaction>
</comment>
<comment type="pathway">
    <text evidence="1">Amino-acid biosynthesis; L-leucine biosynthesis; L-leucine from 3-methyl-2-oxobutanoate: step 2/4.</text>
</comment>
<comment type="subunit">
    <text evidence="1">Heterodimer of LeuC and LeuD.</text>
</comment>
<comment type="similarity">
    <text evidence="1">Belongs to the LeuD family. LeuD type 1 subfamily.</text>
</comment>
<comment type="sequence caution" evidence="2">
    <conflict type="erroneous initiation">
        <sequence resource="EMBL-CDS" id="AAW74191"/>
    </conflict>
</comment>
<feature type="chain" id="PRO_0000141914" description="3-isopropylmalate dehydratase small subunit">
    <location>
        <begin position="1"/>
        <end position="215"/>
    </location>
</feature>
<name>LEUD_XANOR</name>
<reference key="1">
    <citation type="journal article" date="2005" name="Nucleic Acids Res.">
        <title>The genome sequence of Xanthomonas oryzae pathovar oryzae KACC10331, the bacterial blight pathogen of rice.</title>
        <authorList>
            <person name="Lee B.-M."/>
            <person name="Park Y.-J."/>
            <person name="Park D.-S."/>
            <person name="Kang H.-W."/>
            <person name="Kim J.-G."/>
            <person name="Song E.-S."/>
            <person name="Park I.-C."/>
            <person name="Yoon U.-H."/>
            <person name="Hahn J.-H."/>
            <person name="Koo B.-S."/>
            <person name="Lee G.-B."/>
            <person name="Kim H."/>
            <person name="Park H.-S."/>
            <person name="Yoon K.-O."/>
            <person name="Kim J.-H."/>
            <person name="Jung C.-H."/>
            <person name="Koh N.-H."/>
            <person name="Seo J.-S."/>
            <person name="Go S.-J."/>
        </authorList>
    </citation>
    <scope>NUCLEOTIDE SEQUENCE [LARGE SCALE GENOMIC DNA]</scope>
    <source>
        <strain>KACC10331 / KXO85</strain>
    </source>
</reference>
<organism>
    <name type="scientific">Xanthomonas oryzae pv. oryzae (strain KACC10331 / KXO85)</name>
    <dbReference type="NCBI Taxonomy" id="291331"/>
    <lineage>
        <taxon>Bacteria</taxon>
        <taxon>Pseudomonadati</taxon>
        <taxon>Pseudomonadota</taxon>
        <taxon>Gammaproteobacteria</taxon>
        <taxon>Lysobacterales</taxon>
        <taxon>Lysobacteraceae</taxon>
        <taxon>Xanthomonas</taxon>
    </lineage>
</organism>
<accession>Q5H4D0</accession>
<sequence>MTPFTQHTGLVAPLDRANVDTDQIIPKQFLKSIKRTGFGPNLFDEWRYLDIGEPGRDNSTRPLNPEFVLNFPRYQGASVLLARENFGCGSSREHAPWALDEYGFRAVIAPSFADIFYNNSFKNGLLPIVLAEAEVDALFEQCLANEGYQLTVDLAAQRVRRPDGVEYSFDIDAFRKHCLLNGLDDIGLTLQEADAIGRFEQDHRARQPWLFGALQ</sequence>
<gene>
    <name evidence="1" type="primary">leuD</name>
    <name type="ordered locus">XOO0937</name>
</gene>
<evidence type="ECO:0000255" key="1">
    <source>
        <dbReference type="HAMAP-Rule" id="MF_01031"/>
    </source>
</evidence>
<evidence type="ECO:0000305" key="2"/>
<proteinExistence type="inferred from homology"/>
<protein>
    <recommendedName>
        <fullName evidence="1">3-isopropylmalate dehydratase small subunit</fullName>
        <ecNumber evidence="1">4.2.1.33</ecNumber>
    </recommendedName>
    <alternativeName>
        <fullName evidence="1">Alpha-IPM isomerase</fullName>
        <shortName evidence="1">IPMI</shortName>
    </alternativeName>
    <alternativeName>
        <fullName evidence="1">Isopropylmalate isomerase</fullName>
    </alternativeName>
</protein>
<dbReference type="EC" id="4.2.1.33" evidence="1"/>
<dbReference type="EMBL" id="AE013598">
    <property type="protein sequence ID" value="AAW74191.1"/>
    <property type="status" value="ALT_INIT"/>
    <property type="molecule type" value="Genomic_DNA"/>
</dbReference>
<dbReference type="SMR" id="Q5H4D0"/>
<dbReference type="STRING" id="291331.XOO0937"/>
<dbReference type="KEGG" id="xoo:XOO0937"/>
<dbReference type="HOGENOM" id="CLU_081378_0_3_6"/>
<dbReference type="UniPathway" id="UPA00048">
    <property type="reaction ID" value="UER00071"/>
</dbReference>
<dbReference type="Proteomes" id="UP000006735">
    <property type="component" value="Chromosome"/>
</dbReference>
<dbReference type="GO" id="GO:0009316">
    <property type="term" value="C:3-isopropylmalate dehydratase complex"/>
    <property type="evidence" value="ECO:0007669"/>
    <property type="project" value="InterPro"/>
</dbReference>
<dbReference type="GO" id="GO:0003861">
    <property type="term" value="F:3-isopropylmalate dehydratase activity"/>
    <property type="evidence" value="ECO:0007669"/>
    <property type="project" value="UniProtKB-UniRule"/>
</dbReference>
<dbReference type="GO" id="GO:0009098">
    <property type="term" value="P:L-leucine biosynthetic process"/>
    <property type="evidence" value="ECO:0007669"/>
    <property type="project" value="UniProtKB-UniRule"/>
</dbReference>
<dbReference type="CDD" id="cd01577">
    <property type="entry name" value="IPMI_Swivel"/>
    <property type="match status" value="1"/>
</dbReference>
<dbReference type="FunFam" id="3.20.19.10:FF:000003">
    <property type="entry name" value="3-isopropylmalate dehydratase small subunit"/>
    <property type="match status" value="1"/>
</dbReference>
<dbReference type="Gene3D" id="3.20.19.10">
    <property type="entry name" value="Aconitase, domain 4"/>
    <property type="match status" value="1"/>
</dbReference>
<dbReference type="HAMAP" id="MF_01031">
    <property type="entry name" value="LeuD_type1"/>
    <property type="match status" value="1"/>
</dbReference>
<dbReference type="InterPro" id="IPR004431">
    <property type="entry name" value="3-IsopropMal_deHydase_ssu"/>
</dbReference>
<dbReference type="InterPro" id="IPR015928">
    <property type="entry name" value="Aconitase/3IPM_dehydase_swvl"/>
</dbReference>
<dbReference type="InterPro" id="IPR000573">
    <property type="entry name" value="AconitaseA/IPMdHydase_ssu_swvl"/>
</dbReference>
<dbReference type="InterPro" id="IPR033940">
    <property type="entry name" value="IPMI_Swivel"/>
</dbReference>
<dbReference type="InterPro" id="IPR050075">
    <property type="entry name" value="LeuD"/>
</dbReference>
<dbReference type="NCBIfam" id="TIGR00171">
    <property type="entry name" value="leuD"/>
    <property type="match status" value="1"/>
</dbReference>
<dbReference type="NCBIfam" id="NF002458">
    <property type="entry name" value="PRK01641.1"/>
    <property type="match status" value="1"/>
</dbReference>
<dbReference type="PANTHER" id="PTHR43345:SF5">
    <property type="entry name" value="3-ISOPROPYLMALATE DEHYDRATASE SMALL SUBUNIT"/>
    <property type="match status" value="1"/>
</dbReference>
<dbReference type="PANTHER" id="PTHR43345">
    <property type="entry name" value="3-ISOPROPYLMALATE DEHYDRATASE SMALL SUBUNIT 2-RELATED-RELATED"/>
    <property type="match status" value="1"/>
</dbReference>
<dbReference type="Pfam" id="PF00694">
    <property type="entry name" value="Aconitase_C"/>
    <property type="match status" value="1"/>
</dbReference>
<dbReference type="SUPFAM" id="SSF52016">
    <property type="entry name" value="LeuD/IlvD-like"/>
    <property type="match status" value="1"/>
</dbReference>
<keyword id="KW-0028">Amino-acid biosynthesis</keyword>
<keyword id="KW-0100">Branched-chain amino acid biosynthesis</keyword>
<keyword id="KW-0432">Leucine biosynthesis</keyword>
<keyword id="KW-0456">Lyase</keyword>
<keyword id="KW-1185">Reference proteome</keyword>